<comment type="function">
    <text evidence="1">Catalyzes the 2-thiolation of uridine at the wobble position (U34) of tRNA, leading to the formation of s(2)U34.</text>
</comment>
<comment type="catalytic activity">
    <reaction evidence="1">
        <text>S-sulfanyl-L-cysteinyl-[protein] + uridine(34) in tRNA + AH2 + ATP = 2-thiouridine(34) in tRNA + L-cysteinyl-[protein] + A + AMP + diphosphate + H(+)</text>
        <dbReference type="Rhea" id="RHEA:47032"/>
        <dbReference type="Rhea" id="RHEA-COMP:10131"/>
        <dbReference type="Rhea" id="RHEA-COMP:11726"/>
        <dbReference type="Rhea" id="RHEA-COMP:11727"/>
        <dbReference type="Rhea" id="RHEA-COMP:11728"/>
        <dbReference type="ChEBI" id="CHEBI:13193"/>
        <dbReference type="ChEBI" id="CHEBI:15378"/>
        <dbReference type="ChEBI" id="CHEBI:17499"/>
        <dbReference type="ChEBI" id="CHEBI:29950"/>
        <dbReference type="ChEBI" id="CHEBI:30616"/>
        <dbReference type="ChEBI" id="CHEBI:33019"/>
        <dbReference type="ChEBI" id="CHEBI:61963"/>
        <dbReference type="ChEBI" id="CHEBI:65315"/>
        <dbReference type="ChEBI" id="CHEBI:87170"/>
        <dbReference type="ChEBI" id="CHEBI:456215"/>
        <dbReference type="EC" id="2.8.1.13"/>
    </reaction>
</comment>
<comment type="subcellular location">
    <subcellularLocation>
        <location evidence="1">Cytoplasm</location>
    </subcellularLocation>
</comment>
<comment type="similarity">
    <text evidence="1">Belongs to the MnmA/TRMU family.</text>
</comment>
<organism>
    <name type="scientific">Chromobacterium violaceum (strain ATCC 12472 / DSM 30191 / JCM 1249 / CCUG 213 / NBRC 12614 / NCIMB 9131 / NCTC 9757 / MK)</name>
    <dbReference type="NCBI Taxonomy" id="243365"/>
    <lineage>
        <taxon>Bacteria</taxon>
        <taxon>Pseudomonadati</taxon>
        <taxon>Pseudomonadota</taxon>
        <taxon>Betaproteobacteria</taxon>
        <taxon>Neisseriales</taxon>
        <taxon>Chromobacteriaceae</taxon>
        <taxon>Chromobacterium</taxon>
    </lineage>
</organism>
<sequence>MDEGIRASGGIRACQTGKQKQGRKRPVTGKKRIVVGMSGGVDSSVTAWLLKQQGHEVIGVFMQNWEDDNDDEYCSIKQDALDAMSVADIVGIDMEIVNFAKEYKDRVFSYFLKEYSAGRTPNPDVLCNAEIKFKAFLDYAMELGADCIATGHYARKLEQDGTHYLMKAVDHTKDQSYFLYRLQQHQLAKAIFPLGDIRKTEVRRLAEEAGLPTAAKKDSTGICFIGERPFREFLQRYLPTSPGQMVTPDGKVVGEHIGLMYYTLGQRKGLTIGGSRDGNGEPWFVAGKDIPGNKLIVVQGHDHPLLLKPTLSMADLSWTLPDAPAPGEYSAKNRYRMADAACTLSPIVDGQASLTFQEKQWAVTPGQSAVLYHGDICLGGGIIQ</sequence>
<dbReference type="EC" id="2.8.1.13" evidence="1"/>
<dbReference type="EMBL" id="AE016825">
    <property type="protein sequence ID" value="AAQ61066.1"/>
    <property type="molecule type" value="Genomic_DNA"/>
</dbReference>
<dbReference type="SMR" id="Q7MBE1"/>
<dbReference type="STRING" id="243365.CV_3402"/>
<dbReference type="KEGG" id="cvi:CV_3402"/>
<dbReference type="eggNOG" id="COG0482">
    <property type="taxonomic scope" value="Bacteria"/>
</dbReference>
<dbReference type="HOGENOM" id="CLU_035188_1_0_4"/>
<dbReference type="Proteomes" id="UP000001424">
    <property type="component" value="Chromosome"/>
</dbReference>
<dbReference type="GO" id="GO:0005737">
    <property type="term" value="C:cytoplasm"/>
    <property type="evidence" value="ECO:0007669"/>
    <property type="project" value="UniProtKB-SubCell"/>
</dbReference>
<dbReference type="GO" id="GO:0005524">
    <property type="term" value="F:ATP binding"/>
    <property type="evidence" value="ECO:0007669"/>
    <property type="project" value="UniProtKB-KW"/>
</dbReference>
<dbReference type="GO" id="GO:0000049">
    <property type="term" value="F:tRNA binding"/>
    <property type="evidence" value="ECO:0007669"/>
    <property type="project" value="UniProtKB-KW"/>
</dbReference>
<dbReference type="GO" id="GO:0103016">
    <property type="term" value="F:tRNA-uridine 2-sulfurtransferase activity"/>
    <property type="evidence" value="ECO:0007669"/>
    <property type="project" value="UniProtKB-EC"/>
</dbReference>
<dbReference type="GO" id="GO:0002143">
    <property type="term" value="P:tRNA wobble position uridine thiolation"/>
    <property type="evidence" value="ECO:0007669"/>
    <property type="project" value="TreeGrafter"/>
</dbReference>
<dbReference type="CDD" id="cd01998">
    <property type="entry name" value="MnmA_TRMU-like"/>
    <property type="match status" value="1"/>
</dbReference>
<dbReference type="FunFam" id="2.30.30.280:FF:000001">
    <property type="entry name" value="tRNA-specific 2-thiouridylase MnmA"/>
    <property type="match status" value="1"/>
</dbReference>
<dbReference type="FunFam" id="2.40.30.10:FF:000023">
    <property type="entry name" value="tRNA-specific 2-thiouridylase MnmA"/>
    <property type="match status" value="1"/>
</dbReference>
<dbReference type="FunFam" id="3.40.50.620:FF:000004">
    <property type="entry name" value="tRNA-specific 2-thiouridylase MnmA"/>
    <property type="match status" value="1"/>
</dbReference>
<dbReference type="Gene3D" id="2.30.30.280">
    <property type="entry name" value="Adenine nucleotide alpha hydrolases-like domains"/>
    <property type="match status" value="1"/>
</dbReference>
<dbReference type="Gene3D" id="3.40.50.620">
    <property type="entry name" value="HUPs"/>
    <property type="match status" value="1"/>
</dbReference>
<dbReference type="Gene3D" id="2.40.30.10">
    <property type="entry name" value="Translation factors"/>
    <property type="match status" value="1"/>
</dbReference>
<dbReference type="HAMAP" id="MF_00144">
    <property type="entry name" value="tRNA_thiouridyl_MnmA"/>
    <property type="match status" value="1"/>
</dbReference>
<dbReference type="InterPro" id="IPR004506">
    <property type="entry name" value="MnmA-like"/>
</dbReference>
<dbReference type="InterPro" id="IPR046885">
    <property type="entry name" value="MnmA-like_C"/>
</dbReference>
<dbReference type="InterPro" id="IPR046884">
    <property type="entry name" value="MnmA-like_central"/>
</dbReference>
<dbReference type="InterPro" id="IPR023382">
    <property type="entry name" value="MnmA-like_central_sf"/>
</dbReference>
<dbReference type="InterPro" id="IPR014729">
    <property type="entry name" value="Rossmann-like_a/b/a_fold"/>
</dbReference>
<dbReference type="NCBIfam" id="NF001138">
    <property type="entry name" value="PRK00143.1"/>
    <property type="match status" value="1"/>
</dbReference>
<dbReference type="NCBIfam" id="TIGR00420">
    <property type="entry name" value="trmU"/>
    <property type="match status" value="1"/>
</dbReference>
<dbReference type="PANTHER" id="PTHR11933:SF5">
    <property type="entry name" value="MITOCHONDRIAL TRNA-SPECIFIC 2-THIOURIDYLASE 1"/>
    <property type="match status" value="1"/>
</dbReference>
<dbReference type="PANTHER" id="PTHR11933">
    <property type="entry name" value="TRNA 5-METHYLAMINOMETHYL-2-THIOURIDYLATE -METHYLTRANSFERASE"/>
    <property type="match status" value="1"/>
</dbReference>
<dbReference type="Pfam" id="PF03054">
    <property type="entry name" value="tRNA_Me_trans"/>
    <property type="match status" value="1"/>
</dbReference>
<dbReference type="Pfam" id="PF20258">
    <property type="entry name" value="tRNA_Me_trans_C"/>
    <property type="match status" value="1"/>
</dbReference>
<dbReference type="Pfam" id="PF20259">
    <property type="entry name" value="tRNA_Me_trans_M"/>
    <property type="match status" value="1"/>
</dbReference>
<dbReference type="SUPFAM" id="SSF52402">
    <property type="entry name" value="Adenine nucleotide alpha hydrolases-like"/>
    <property type="match status" value="1"/>
</dbReference>
<protein>
    <recommendedName>
        <fullName evidence="1">tRNA-specific 2-thiouridylase MnmA</fullName>
        <ecNumber evidence="1">2.8.1.13</ecNumber>
    </recommendedName>
</protein>
<accession>Q7MBE1</accession>
<name>MNMA_CHRVO</name>
<proteinExistence type="inferred from homology"/>
<gene>
    <name evidence="1" type="primary">mnmA</name>
    <name type="ordered locus">CV_3402</name>
</gene>
<keyword id="KW-0067">ATP-binding</keyword>
<keyword id="KW-0963">Cytoplasm</keyword>
<keyword id="KW-1015">Disulfide bond</keyword>
<keyword id="KW-0547">Nucleotide-binding</keyword>
<keyword id="KW-1185">Reference proteome</keyword>
<keyword id="KW-0694">RNA-binding</keyword>
<keyword id="KW-0808">Transferase</keyword>
<keyword id="KW-0819">tRNA processing</keyword>
<keyword id="KW-0820">tRNA-binding</keyword>
<feature type="chain" id="PRO_0000349580" description="tRNA-specific 2-thiouridylase MnmA">
    <location>
        <begin position="1"/>
        <end position="384"/>
    </location>
</feature>
<feature type="region of interest" description="Disordered" evidence="2">
    <location>
        <begin position="1"/>
        <end position="26"/>
    </location>
</feature>
<feature type="region of interest" description="Interaction with target base in tRNA" evidence="1">
    <location>
        <begin position="122"/>
        <end position="124"/>
    </location>
</feature>
<feature type="region of interest" description="Interaction with tRNA" evidence="1">
    <location>
        <begin position="173"/>
        <end position="175"/>
    </location>
</feature>
<feature type="region of interest" description="Interaction with tRNA" evidence="1">
    <location>
        <begin position="334"/>
        <end position="335"/>
    </location>
</feature>
<feature type="active site" description="Nucleophile" evidence="1">
    <location>
        <position position="127"/>
    </location>
</feature>
<feature type="active site" description="Cysteine persulfide intermediate" evidence="1">
    <location>
        <position position="223"/>
    </location>
</feature>
<feature type="binding site" evidence="1">
    <location>
        <begin position="36"/>
        <end position="43"/>
    </location>
    <ligand>
        <name>ATP</name>
        <dbReference type="ChEBI" id="CHEBI:30616"/>
    </ligand>
</feature>
<feature type="binding site" evidence="1">
    <location>
        <position position="62"/>
    </location>
    <ligand>
        <name>ATP</name>
        <dbReference type="ChEBI" id="CHEBI:30616"/>
    </ligand>
</feature>
<feature type="binding site" evidence="1">
    <location>
        <position position="151"/>
    </location>
    <ligand>
        <name>ATP</name>
        <dbReference type="ChEBI" id="CHEBI:30616"/>
    </ligand>
</feature>
<feature type="site" description="Interaction with tRNA" evidence="1">
    <location>
        <position position="152"/>
    </location>
</feature>
<feature type="site" description="Interaction with tRNA" evidence="1">
    <location>
        <position position="367"/>
    </location>
</feature>
<feature type="disulfide bond" description="Alternate" evidence="1">
    <location>
        <begin position="127"/>
        <end position="223"/>
    </location>
</feature>
<evidence type="ECO:0000255" key="1">
    <source>
        <dbReference type="HAMAP-Rule" id="MF_00144"/>
    </source>
</evidence>
<evidence type="ECO:0000256" key="2">
    <source>
        <dbReference type="SAM" id="MobiDB-lite"/>
    </source>
</evidence>
<reference key="1">
    <citation type="journal article" date="2003" name="Proc. Natl. Acad. Sci. U.S.A.">
        <title>The complete genome sequence of Chromobacterium violaceum reveals remarkable and exploitable bacterial adaptability.</title>
        <authorList>
            <person name="Vasconcelos A.T.R."/>
            <person name="de Almeida D.F."/>
            <person name="Hungria M."/>
            <person name="Guimaraes C.T."/>
            <person name="Antonio R.V."/>
            <person name="Almeida F.C."/>
            <person name="de Almeida L.G.P."/>
            <person name="de Almeida R."/>
            <person name="Alves-Gomes J.A."/>
            <person name="Andrade E.M."/>
            <person name="Araripe J."/>
            <person name="de Araujo M.F.F."/>
            <person name="Astolfi-Filho S."/>
            <person name="Azevedo V."/>
            <person name="Baptista A.J."/>
            <person name="Bataus L.A.M."/>
            <person name="Batista J.S."/>
            <person name="Belo A."/>
            <person name="van den Berg C."/>
            <person name="Bogo M."/>
            <person name="Bonatto S."/>
            <person name="Bordignon J."/>
            <person name="Brigido M.M."/>
            <person name="Brito C.A."/>
            <person name="Brocchi M."/>
            <person name="Burity H.A."/>
            <person name="Camargo A.A."/>
            <person name="Cardoso D.D.P."/>
            <person name="Carneiro N.P."/>
            <person name="Carraro D.M."/>
            <person name="Carvalho C.M.B."/>
            <person name="Cascardo J.C.M."/>
            <person name="Cavada B.S."/>
            <person name="Chueire L.M.O."/>
            <person name="Creczynski-Pasa T.B."/>
            <person name="Cunha-Junior N.C."/>
            <person name="Fagundes N."/>
            <person name="Falcao C.L."/>
            <person name="Fantinatti F."/>
            <person name="Farias I.P."/>
            <person name="Felipe M.S.S."/>
            <person name="Ferrari L.P."/>
            <person name="Ferro J.A."/>
            <person name="Ferro M.I.T."/>
            <person name="Franco G.R."/>
            <person name="Freitas N.S.A."/>
            <person name="Furlan L.R."/>
            <person name="Gazzinelli R.T."/>
            <person name="Gomes E.A."/>
            <person name="Goncalves P.R."/>
            <person name="Grangeiro T.B."/>
            <person name="Grattapaglia D."/>
            <person name="Grisard E.C."/>
            <person name="Hanna E.S."/>
            <person name="Jardim S.N."/>
            <person name="Laurino J."/>
            <person name="Leoi L.C.T."/>
            <person name="Lima L.F.A."/>
            <person name="Loureiro M.F."/>
            <person name="Lyra M.C.C.P."/>
            <person name="Madeira H.M.F."/>
            <person name="Manfio G.P."/>
            <person name="Maranhao A.Q."/>
            <person name="Martins W.S."/>
            <person name="di Mauro S.M.Z."/>
            <person name="de Medeiros S.R.B."/>
            <person name="Meissner R.V."/>
            <person name="Moreira M.A.M."/>
            <person name="Nascimento F.F."/>
            <person name="Nicolas M.F."/>
            <person name="Oliveira J.G."/>
            <person name="Oliveira S.C."/>
            <person name="Paixao R.F.C."/>
            <person name="Parente J.A."/>
            <person name="Pedrosa F.O."/>
            <person name="Pena S.D.J."/>
            <person name="Pereira J.O."/>
            <person name="Pereira M."/>
            <person name="Pinto L.S.R.C."/>
            <person name="Pinto L.S."/>
            <person name="Porto J.I.R."/>
            <person name="Potrich D.P."/>
            <person name="Ramalho-Neto C.E."/>
            <person name="Reis A.M.M."/>
            <person name="Rigo L.U."/>
            <person name="Rondinelli E."/>
            <person name="Santos E.B.P."/>
            <person name="Santos F.R."/>
            <person name="Schneider M.P.C."/>
            <person name="Seuanez H.N."/>
            <person name="Silva A.M.R."/>
            <person name="da Silva A.L.C."/>
            <person name="Silva D.W."/>
            <person name="Silva R."/>
            <person name="Simoes I.C."/>
            <person name="Simon D."/>
            <person name="Soares C.M.A."/>
            <person name="Soares R.B.A."/>
            <person name="Souza E.M."/>
            <person name="Souza K.R.L."/>
            <person name="Souza R.C."/>
            <person name="Steffens M.B.R."/>
            <person name="Steindel M."/>
            <person name="Teixeira S.R."/>
            <person name="Urmenyi T."/>
            <person name="Vettore A."/>
            <person name="Wassem R."/>
            <person name="Zaha A."/>
            <person name="Simpson A.J.G."/>
        </authorList>
    </citation>
    <scope>NUCLEOTIDE SEQUENCE [LARGE SCALE GENOMIC DNA]</scope>
    <source>
        <strain>ATCC 12472 / DSM 30191 / JCM 1249 / CCUG 213 / NBRC 12614 / NCIMB 9131 / NCTC 9757 / MK</strain>
    </source>
</reference>